<feature type="chain" id="PRO_1000148987" description="1-(5-phosphoribosyl)-5-[(5-phosphoribosylamino)methylideneamino] imidazole-4-carboxamide isomerase">
    <location>
        <begin position="1"/>
        <end position="245"/>
    </location>
</feature>
<feature type="active site" description="Proton acceptor" evidence="1">
    <location>
        <position position="7"/>
    </location>
</feature>
<feature type="active site" description="Proton donor" evidence="1">
    <location>
        <position position="129"/>
    </location>
</feature>
<sequence>MIIPAIDLIDGNVVRLYQGDYGQQTTFDLSPLAQLQSYEAQGAKWLHIVDLTGAKDPAKRQTLLISQLVAGLNANIQVGGGIRTEEQVTELLNIGVKRVVIGSLAVKEPELVKQWFIKYGSEAICLALDVNINQSGEKIVAVSGWQSGGGKSLESLVETFSAVGLKHALVTDISRDGTLTGANTALYQEIAASYPDIAWQASGGIATLADVAAVRDSGAAGIIIGKALLINQFNVVEAIQCWPND</sequence>
<reference key="1">
    <citation type="submission" date="2008-12" db="EMBL/GenBank/DDBJ databases">
        <title>Complete sequence of chromosome of Shewanella baltica OS223.</title>
        <authorList>
            <consortium name="US DOE Joint Genome Institute"/>
            <person name="Lucas S."/>
            <person name="Copeland A."/>
            <person name="Lapidus A."/>
            <person name="Glavina del Rio T."/>
            <person name="Dalin E."/>
            <person name="Tice H."/>
            <person name="Bruce D."/>
            <person name="Goodwin L."/>
            <person name="Pitluck S."/>
            <person name="Chertkov O."/>
            <person name="Meincke L."/>
            <person name="Brettin T."/>
            <person name="Detter J.C."/>
            <person name="Han C."/>
            <person name="Kuske C.R."/>
            <person name="Larimer F."/>
            <person name="Land M."/>
            <person name="Hauser L."/>
            <person name="Kyrpides N."/>
            <person name="Ovchinnikova G."/>
            <person name="Brettar I."/>
            <person name="Rodrigues J."/>
            <person name="Konstantinidis K."/>
            <person name="Tiedje J."/>
        </authorList>
    </citation>
    <scope>NUCLEOTIDE SEQUENCE [LARGE SCALE GENOMIC DNA]</scope>
    <source>
        <strain>OS223</strain>
    </source>
</reference>
<evidence type="ECO:0000255" key="1">
    <source>
        <dbReference type="HAMAP-Rule" id="MF_01014"/>
    </source>
</evidence>
<proteinExistence type="inferred from homology"/>
<dbReference type="EC" id="5.3.1.16" evidence="1"/>
<dbReference type="EMBL" id="CP001252">
    <property type="protein sequence ID" value="ACK46433.1"/>
    <property type="molecule type" value="Genomic_DNA"/>
</dbReference>
<dbReference type="RefSeq" id="WP_012089367.1">
    <property type="nucleotide sequence ID" value="NC_011663.1"/>
</dbReference>
<dbReference type="SMR" id="B8E9A0"/>
<dbReference type="KEGG" id="sbp:Sbal223_1928"/>
<dbReference type="HOGENOM" id="CLU_048577_1_2_6"/>
<dbReference type="UniPathway" id="UPA00031">
    <property type="reaction ID" value="UER00009"/>
</dbReference>
<dbReference type="Proteomes" id="UP000002507">
    <property type="component" value="Chromosome"/>
</dbReference>
<dbReference type="GO" id="GO:0005737">
    <property type="term" value="C:cytoplasm"/>
    <property type="evidence" value="ECO:0007669"/>
    <property type="project" value="UniProtKB-SubCell"/>
</dbReference>
<dbReference type="GO" id="GO:0003949">
    <property type="term" value="F:1-(5-phosphoribosyl)-5-[(5-phosphoribosylamino)methylideneamino]imidazole-4-carboxamide isomerase activity"/>
    <property type="evidence" value="ECO:0007669"/>
    <property type="project" value="UniProtKB-UniRule"/>
</dbReference>
<dbReference type="GO" id="GO:0000105">
    <property type="term" value="P:L-histidine biosynthetic process"/>
    <property type="evidence" value="ECO:0007669"/>
    <property type="project" value="UniProtKB-UniRule"/>
</dbReference>
<dbReference type="GO" id="GO:0000162">
    <property type="term" value="P:L-tryptophan biosynthetic process"/>
    <property type="evidence" value="ECO:0007669"/>
    <property type="project" value="TreeGrafter"/>
</dbReference>
<dbReference type="CDD" id="cd04732">
    <property type="entry name" value="HisA"/>
    <property type="match status" value="1"/>
</dbReference>
<dbReference type="FunFam" id="3.20.20.70:FF:000009">
    <property type="entry name" value="1-(5-phosphoribosyl)-5-[(5-phosphoribosylamino)methylideneamino] imidazole-4-carboxamide isomerase"/>
    <property type="match status" value="1"/>
</dbReference>
<dbReference type="Gene3D" id="3.20.20.70">
    <property type="entry name" value="Aldolase class I"/>
    <property type="match status" value="1"/>
</dbReference>
<dbReference type="HAMAP" id="MF_01014">
    <property type="entry name" value="HisA"/>
    <property type="match status" value="1"/>
</dbReference>
<dbReference type="InterPro" id="IPR013785">
    <property type="entry name" value="Aldolase_TIM"/>
</dbReference>
<dbReference type="InterPro" id="IPR006062">
    <property type="entry name" value="His_biosynth"/>
</dbReference>
<dbReference type="InterPro" id="IPR006063">
    <property type="entry name" value="HisA_bact_arch"/>
</dbReference>
<dbReference type="InterPro" id="IPR044524">
    <property type="entry name" value="Isoase_HisA-like"/>
</dbReference>
<dbReference type="InterPro" id="IPR023016">
    <property type="entry name" value="Isoase_HisA-like_bact"/>
</dbReference>
<dbReference type="InterPro" id="IPR011060">
    <property type="entry name" value="RibuloseP-bd_barrel"/>
</dbReference>
<dbReference type="NCBIfam" id="TIGR00007">
    <property type="entry name" value="1-(5-phosphoribosyl)-5-[(5-phosphoribosylamino)methylideneamino]imidazole-4-carboxamide isomerase"/>
    <property type="match status" value="1"/>
</dbReference>
<dbReference type="PANTHER" id="PTHR43090">
    <property type="entry name" value="1-(5-PHOSPHORIBOSYL)-5-[(5-PHOSPHORIBOSYLAMINO)METHYLIDENEAMINO] IMIDAZOLE-4-CARBOXAMIDE ISOMERASE"/>
    <property type="match status" value="1"/>
</dbReference>
<dbReference type="PANTHER" id="PTHR43090:SF2">
    <property type="entry name" value="1-(5-PHOSPHORIBOSYL)-5-[(5-PHOSPHORIBOSYLAMINO)METHYLIDENEAMINO] IMIDAZOLE-4-CARBOXAMIDE ISOMERASE"/>
    <property type="match status" value="1"/>
</dbReference>
<dbReference type="Pfam" id="PF00977">
    <property type="entry name" value="His_biosynth"/>
    <property type="match status" value="1"/>
</dbReference>
<dbReference type="SUPFAM" id="SSF51366">
    <property type="entry name" value="Ribulose-phoshate binding barrel"/>
    <property type="match status" value="1"/>
</dbReference>
<gene>
    <name evidence="1" type="primary">hisA</name>
    <name type="ordered locus">Sbal223_1928</name>
</gene>
<keyword id="KW-0028">Amino-acid biosynthesis</keyword>
<keyword id="KW-0963">Cytoplasm</keyword>
<keyword id="KW-0368">Histidine biosynthesis</keyword>
<keyword id="KW-0413">Isomerase</keyword>
<name>HIS4_SHEB2</name>
<protein>
    <recommendedName>
        <fullName evidence="1">1-(5-phosphoribosyl)-5-[(5-phosphoribosylamino)methylideneamino] imidazole-4-carboxamide isomerase</fullName>
        <ecNumber evidence="1">5.3.1.16</ecNumber>
    </recommendedName>
    <alternativeName>
        <fullName evidence="1">Phosphoribosylformimino-5-aminoimidazole carboxamide ribotide isomerase</fullName>
    </alternativeName>
</protein>
<organism>
    <name type="scientific">Shewanella baltica (strain OS223)</name>
    <dbReference type="NCBI Taxonomy" id="407976"/>
    <lineage>
        <taxon>Bacteria</taxon>
        <taxon>Pseudomonadati</taxon>
        <taxon>Pseudomonadota</taxon>
        <taxon>Gammaproteobacteria</taxon>
        <taxon>Alteromonadales</taxon>
        <taxon>Shewanellaceae</taxon>
        <taxon>Shewanella</taxon>
    </lineage>
</organism>
<accession>B8E9A0</accession>
<comment type="catalytic activity">
    <reaction evidence="1">
        <text>1-(5-phospho-beta-D-ribosyl)-5-[(5-phospho-beta-D-ribosylamino)methylideneamino]imidazole-4-carboxamide = 5-[(5-phospho-1-deoxy-D-ribulos-1-ylimino)methylamino]-1-(5-phospho-beta-D-ribosyl)imidazole-4-carboxamide</text>
        <dbReference type="Rhea" id="RHEA:15469"/>
        <dbReference type="ChEBI" id="CHEBI:58435"/>
        <dbReference type="ChEBI" id="CHEBI:58525"/>
        <dbReference type="EC" id="5.3.1.16"/>
    </reaction>
</comment>
<comment type="pathway">
    <text evidence="1">Amino-acid biosynthesis; L-histidine biosynthesis; L-histidine from 5-phospho-alpha-D-ribose 1-diphosphate: step 4/9.</text>
</comment>
<comment type="subcellular location">
    <subcellularLocation>
        <location evidence="1">Cytoplasm</location>
    </subcellularLocation>
</comment>
<comment type="similarity">
    <text evidence="1">Belongs to the HisA/HisF family.</text>
</comment>